<protein>
    <recommendedName>
        <fullName evidence="1">Homoserine kinase</fullName>
        <shortName evidence="1">HK</shortName>
        <shortName evidence="1">HSK</shortName>
        <ecNumber evidence="1">2.7.1.39</ecNumber>
    </recommendedName>
</protein>
<gene>
    <name evidence="1" type="primary">thrB</name>
    <name type="ordered locus">PC1_3667</name>
</gene>
<feature type="chain" id="PRO_1000205737" description="Homoserine kinase">
    <location>
        <begin position="1"/>
        <end position="309"/>
    </location>
</feature>
<feature type="binding site" evidence="1">
    <location>
        <begin position="91"/>
        <end position="101"/>
    </location>
    <ligand>
        <name>ATP</name>
        <dbReference type="ChEBI" id="CHEBI:30616"/>
    </ligand>
</feature>
<name>KHSE_PECCP</name>
<dbReference type="EC" id="2.7.1.39" evidence="1"/>
<dbReference type="EMBL" id="CP001657">
    <property type="protein sequence ID" value="ACT14682.1"/>
    <property type="molecule type" value="Genomic_DNA"/>
</dbReference>
<dbReference type="RefSeq" id="WP_015841797.1">
    <property type="nucleotide sequence ID" value="NC_012917.1"/>
</dbReference>
<dbReference type="SMR" id="C6DF18"/>
<dbReference type="STRING" id="561230.PC1_3667"/>
<dbReference type="GeneID" id="67792524"/>
<dbReference type="KEGG" id="pct:PC1_3667"/>
<dbReference type="eggNOG" id="COG0083">
    <property type="taxonomic scope" value="Bacteria"/>
</dbReference>
<dbReference type="HOGENOM" id="CLU_041243_1_1_6"/>
<dbReference type="OrthoDB" id="9769912at2"/>
<dbReference type="UniPathway" id="UPA00050">
    <property type="reaction ID" value="UER00064"/>
</dbReference>
<dbReference type="Proteomes" id="UP000002736">
    <property type="component" value="Chromosome"/>
</dbReference>
<dbReference type="GO" id="GO:0005737">
    <property type="term" value="C:cytoplasm"/>
    <property type="evidence" value="ECO:0007669"/>
    <property type="project" value="UniProtKB-SubCell"/>
</dbReference>
<dbReference type="GO" id="GO:0005524">
    <property type="term" value="F:ATP binding"/>
    <property type="evidence" value="ECO:0007669"/>
    <property type="project" value="UniProtKB-UniRule"/>
</dbReference>
<dbReference type="GO" id="GO:0004413">
    <property type="term" value="F:homoserine kinase activity"/>
    <property type="evidence" value="ECO:0007669"/>
    <property type="project" value="UniProtKB-UniRule"/>
</dbReference>
<dbReference type="GO" id="GO:0009088">
    <property type="term" value="P:threonine biosynthetic process"/>
    <property type="evidence" value="ECO:0007669"/>
    <property type="project" value="UniProtKB-UniRule"/>
</dbReference>
<dbReference type="FunFam" id="3.30.230.10:FF:000020">
    <property type="entry name" value="Homoserine kinase"/>
    <property type="match status" value="1"/>
</dbReference>
<dbReference type="Gene3D" id="3.30.230.10">
    <property type="match status" value="1"/>
</dbReference>
<dbReference type="Gene3D" id="3.30.70.890">
    <property type="entry name" value="GHMP kinase, C-terminal domain"/>
    <property type="match status" value="1"/>
</dbReference>
<dbReference type="HAMAP" id="MF_00384">
    <property type="entry name" value="Homoser_kinase"/>
    <property type="match status" value="1"/>
</dbReference>
<dbReference type="InterPro" id="IPR013750">
    <property type="entry name" value="GHMP_kinase_C_dom"/>
</dbReference>
<dbReference type="InterPro" id="IPR036554">
    <property type="entry name" value="GHMP_kinase_C_sf"/>
</dbReference>
<dbReference type="InterPro" id="IPR006204">
    <property type="entry name" value="GHMP_kinase_N_dom"/>
</dbReference>
<dbReference type="InterPro" id="IPR006203">
    <property type="entry name" value="GHMP_knse_ATP-bd_CS"/>
</dbReference>
<dbReference type="InterPro" id="IPR000870">
    <property type="entry name" value="Homoserine_kinase"/>
</dbReference>
<dbReference type="InterPro" id="IPR020568">
    <property type="entry name" value="Ribosomal_Su5_D2-typ_SF"/>
</dbReference>
<dbReference type="InterPro" id="IPR014721">
    <property type="entry name" value="Ribsml_uS5_D2-typ_fold_subgr"/>
</dbReference>
<dbReference type="NCBIfam" id="NF002288">
    <property type="entry name" value="PRK01212.1-4"/>
    <property type="match status" value="1"/>
</dbReference>
<dbReference type="NCBIfam" id="TIGR00191">
    <property type="entry name" value="thrB"/>
    <property type="match status" value="1"/>
</dbReference>
<dbReference type="PANTHER" id="PTHR20861:SF1">
    <property type="entry name" value="HOMOSERINE KINASE"/>
    <property type="match status" value="1"/>
</dbReference>
<dbReference type="PANTHER" id="PTHR20861">
    <property type="entry name" value="HOMOSERINE/4-DIPHOSPHOCYTIDYL-2-C-METHYL-D-ERYTHRITOL KINASE"/>
    <property type="match status" value="1"/>
</dbReference>
<dbReference type="Pfam" id="PF08544">
    <property type="entry name" value="GHMP_kinases_C"/>
    <property type="match status" value="1"/>
</dbReference>
<dbReference type="Pfam" id="PF00288">
    <property type="entry name" value="GHMP_kinases_N"/>
    <property type="match status" value="1"/>
</dbReference>
<dbReference type="PIRSF" id="PIRSF000676">
    <property type="entry name" value="Homoser_kin"/>
    <property type="match status" value="1"/>
</dbReference>
<dbReference type="PRINTS" id="PR00958">
    <property type="entry name" value="HOMSERKINASE"/>
</dbReference>
<dbReference type="SUPFAM" id="SSF55060">
    <property type="entry name" value="GHMP Kinase, C-terminal domain"/>
    <property type="match status" value="1"/>
</dbReference>
<dbReference type="SUPFAM" id="SSF54211">
    <property type="entry name" value="Ribosomal protein S5 domain 2-like"/>
    <property type="match status" value="1"/>
</dbReference>
<dbReference type="PROSITE" id="PS00627">
    <property type="entry name" value="GHMP_KINASES_ATP"/>
    <property type="match status" value="1"/>
</dbReference>
<evidence type="ECO:0000255" key="1">
    <source>
        <dbReference type="HAMAP-Rule" id="MF_00384"/>
    </source>
</evidence>
<reference key="1">
    <citation type="submission" date="2009-07" db="EMBL/GenBank/DDBJ databases">
        <title>Complete sequence of Pectobacterium carotovorum subsp. carotovorum PC1.</title>
        <authorList>
            <consortium name="US DOE Joint Genome Institute"/>
            <person name="Lucas S."/>
            <person name="Copeland A."/>
            <person name="Lapidus A."/>
            <person name="Glavina del Rio T."/>
            <person name="Tice H."/>
            <person name="Bruce D."/>
            <person name="Goodwin L."/>
            <person name="Pitluck S."/>
            <person name="Munk A.C."/>
            <person name="Brettin T."/>
            <person name="Detter J.C."/>
            <person name="Han C."/>
            <person name="Tapia R."/>
            <person name="Larimer F."/>
            <person name="Land M."/>
            <person name="Hauser L."/>
            <person name="Kyrpides N."/>
            <person name="Mikhailova N."/>
            <person name="Balakrishnan V."/>
            <person name="Glasner J."/>
            <person name="Perna N.T."/>
        </authorList>
    </citation>
    <scope>NUCLEOTIDE SEQUENCE [LARGE SCALE GENOMIC DNA]</scope>
    <source>
        <strain>PC1</strain>
    </source>
</reference>
<organism>
    <name type="scientific">Pectobacterium carotovorum subsp. carotovorum (strain PC1)</name>
    <dbReference type="NCBI Taxonomy" id="561230"/>
    <lineage>
        <taxon>Bacteria</taxon>
        <taxon>Pseudomonadati</taxon>
        <taxon>Pseudomonadota</taxon>
        <taxon>Gammaproteobacteria</taxon>
        <taxon>Enterobacterales</taxon>
        <taxon>Pectobacteriaceae</taxon>
        <taxon>Pectobacterium</taxon>
    </lineage>
</organism>
<proteinExistence type="inferred from homology"/>
<sequence length="309" mass="33113">MVKVYAPASIGNVSVGFDVLGAAVSPVDGSLLGDCVSVEAADLFSLRNEGRFVSKLPDNPKENIVYQCWELFCQEIGKTVPVAMTLEKNMPIGSGLGSSACSVVAGLMAMNEFCGKPLDDTRLLTLMGELEGRISGSVHYDNVAPCFLGGVQLMLEENGIISQPVPSFDDWLWVMAYPGIKVSTAEARAILPAQYRRQDCISHGRYLAGFIHACHTGQAALAAKLMKDVIAEPYRTKLLPGFAAARQAAEDIGALACGISGSGPTLFSVCNDMTSAQRLADWLRDNYLQNDEGFVHICRLDTTGARQLG</sequence>
<accession>C6DF18</accession>
<keyword id="KW-0028">Amino-acid biosynthesis</keyword>
<keyword id="KW-0067">ATP-binding</keyword>
<keyword id="KW-0963">Cytoplasm</keyword>
<keyword id="KW-0418">Kinase</keyword>
<keyword id="KW-0547">Nucleotide-binding</keyword>
<keyword id="KW-0791">Threonine biosynthesis</keyword>
<keyword id="KW-0808">Transferase</keyword>
<comment type="function">
    <text evidence="1">Catalyzes the ATP-dependent phosphorylation of L-homoserine to L-homoserine phosphate.</text>
</comment>
<comment type="catalytic activity">
    <reaction evidence="1">
        <text>L-homoserine + ATP = O-phospho-L-homoserine + ADP + H(+)</text>
        <dbReference type="Rhea" id="RHEA:13985"/>
        <dbReference type="ChEBI" id="CHEBI:15378"/>
        <dbReference type="ChEBI" id="CHEBI:30616"/>
        <dbReference type="ChEBI" id="CHEBI:57476"/>
        <dbReference type="ChEBI" id="CHEBI:57590"/>
        <dbReference type="ChEBI" id="CHEBI:456216"/>
        <dbReference type="EC" id="2.7.1.39"/>
    </reaction>
</comment>
<comment type="pathway">
    <text evidence="1">Amino-acid biosynthesis; L-threonine biosynthesis; L-threonine from L-aspartate: step 4/5.</text>
</comment>
<comment type="subcellular location">
    <subcellularLocation>
        <location evidence="1">Cytoplasm</location>
    </subcellularLocation>
</comment>
<comment type="similarity">
    <text evidence="1">Belongs to the GHMP kinase family. Homoserine kinase subfamily.</text>
</comment>